<reference key="1">
    <citation type="journal article" date="2007" name="PLoS Genet.">
        <title>Patterns and implications of gene gain and loss in the evolution of Prochlorococcus.</title>
        <authorList>
            <person name="Kettler G.C."/>
            <person name="Martiny A.C."/>
            <person name="Huang K."/>
            <person name="Zucker J."/>
            <person name="Coleman M.L."/>
            <person name="Rodrigue S."/>
            <person name="Chen F."/>
            <person name="Lapidus A."/>
            <person name="Ferriera S."/>
            <person name="Johnson J."/>
            <person name="Steglich C."/>
            <person name="Church G.M."/>
            <person name="Richardson P."/>
            <person name="Chisholm S.W."/>
        </authorList>
    </citation>
    <scope>NUCLEOTIDE SEQUENCE [LARGE SCALE GENOMIC DNA]</scope>
    <source>
        <strain>MIT 9211</strain>
    </source>
</reference>
<gene>
    <name type="ordered locus">P9211_01911</name>
</gene>
<dbReference type="EC" id="3.1.2.28" evidence="1"/>
<dbReference type="EMBL" id="CP000878">
    <property type="protein sequence ID" value="ABX08122.1"/>
    <property type="molecule type" value="Genomic_DNA"/>
</dbReference>
<dbReference type="SMR" id="A9BD34"/>
<dbReference type="STRING" id="93059.P9211_01911"/>
<dbReference type="KEGG" id="pmj:P9211_01911"/>
<dbReference type="eggNOG" id="COG0824">
    <property type="taxonomic scope" value="Bacteria"/>
</dbReference>
<dbReference type="HOGENOM" id="CLU_101141_5_3_3"/>
<dbReference type="OrthoDB" id="9800856at2"/>
<dbReference type="UniPathway" id="UPA00995"/>
<dbReference type="UniPathway" id="UPA01057">
    <property type="reaction ID" value="UER01033"/>
</dbReference>
<dbReference type="Proteomes" id="UP000000788">
    <property type="component" value="Chromosome"/>
</dbReference>
<dbReference type="GO" id="GO:0061522">
    <property type="term" value="F:1,4-dihydroxy-2-naphthoyl-CoA thioesterase activity"/>
    <property type="evidence" value="ECO:0007669"/>
    <property type="project" value="UniProtKB-EC"/>
</dbReference>
<dbReference type="GO" id="GO:0042372">
    <property type="term" value="P:phylloquinone biosynthetic process"/>
    <property type="evidence" value="ECO:0007669"/>
    <property type="project" value="UniProtKB-UniRule"/>
</dbReference>
<dbReference type="CDD" id="cd00586">
    <property type="entry name" value="4HBT"/>
    <property type="match status" value="1"/>
</dbReference>
<dbReference type="Gene3D" id="3.10.129.10">
    <property type="entry name" value="Hotdog Thioesterase"/>
    <property type="match status" value="1"/>
</dbReference>
<dbReference type="HAMAP" id="MF_02101">
    <property type="entry name" value="DHNA_CoA_hydrolase"/>
    <property type="match status" value="1"/>
</dbReference>
<dbReference type="InterPro" id="IPR022829">
    <property type="entry name" value="DHNA_CoA_hydrolase"/>
</dbReference>
<dbReference type="InterPro" id="IPR029069">
    <property type="entry name" value="HotDog_dom_sf"/>
</dbReference>
<dbReference type="Pfam" id="PF13279">
    <property type="entry name" value="4HBT_2"/>
    <property type="match status" value="1"/>
</dbReference>
<dbReference type="SUPFAM" id="SSF54637">
    <property type="entry name" value="Thioesterase/thiol ester dehydrase-isomerase"/>
    <property type="match status" value="1"/>
</dbReference>
<comment type="function">
    <text evidence="1">Catalyzes the hydrolysis of 1,4-dihydroxy-2-naphthoyl-CoA (DHNA-CoA) to 1,4-dihydroxy-2-naphthoate (DHNA), a reaction involved in phylloquinone (vitamin K1) biosynthesis.</text>
</comment>
<comment type="catalytic activity">
    <reaction evidence="1">
        <text>1,4-dihydroxy-2-naphthoyl-CoA + H2O = 1,4-dihydroxy-2-naphthoate + CoA + H(+)</text>
        <dbReference type="Rhea" id="RHEA:26309"/>
        <dbReference type="ChEBI" id="CHEBI:11173"/>
        <dbReference type="ChEBI" id="CHEBI:15377"/>
        <dbReference type="ChEBI" id="CHEBI:15378"/>
        <dbReference type="ChEBI" id="CHEBI:57287"/>
        <dbReference type="ChEBI" id="CHEBI:58897"/>
        <dbReference type="EC" id="3.1.2.28"/>
    </reaction>
</comment>
<comment type="pathway">
    <text evidence="1">Cofactor biosynthesis; phylloquinone biosynthesis.</text>
</comment>
<comment type="pathway">
    <text evidence="1">Quinol/quinone metabolism; 1,4-dihydroxy-2-naphthoate biosynthesis; 1,4-dihydroxy-2-naphthoate from chorismate: step 7/7.</text>
</comment>
<comment type="similarity">
    <text evidence="1">Belongs to the 4-hydroxybenzoyl-CoA thioesterase family. DHNA-CoA hydrolase subfamily.</text>
</comment>
<sequence length="151" mass="17351">MLNSLLPADWLYLERIVRFGETDSAGVIHFYQLLRWCHESWEESLERYGLKAADVFPNILNKEKQPLVALPIIHCEADFWKPLQTGDHISIELLPKKISAGSFQVTFKFKRGDNYVAQALIQHQAINSQTRSCCELSTKINSWLAESLCID</sequence>
<proteinExistence type="inferred from homology"/>
<feature type="chain" id="PRO_0000377017" description="1,4-dihydroxy-2-naphthoyl-CoA hydrolase">
    <location>
        <begin position="1"/>
        <end position="151"/>
    </location>
</feature>
<feature type="active site" evidence="1">
    <location>
        <position position="23"/>
    </location>
</feature>
<evidence type="ECO:0000255" key="1">
    <source>
        <dbReference type="HAMAP-Rule" id="MF_02101"/>
    </source>
</evidence>
<organism>
    <name type="scientific">Prochlorococcus marinus (strain MIT 9211)</name>
    <dbReference type="NCBI Taxonomy" id="93059"/>
    <lineage>
        <taxon>Bacteria</taxon>
        <taxon>Bacillati</taxon>
        <taxon>Cyanobacteriota</taxon>
        <taxon>Cyanophyceae</taxon>
        <taxon>Synechococcales</taxon>
        <taxon>Prochlorococcaceae</taxon>
        <taxon>Prochlorococcus</taxon>
    </lineage>
</organism>
<name>DNCH_PROM4</name>
<accession>A9BD34</accession>
<protein>
    <recommendedName>
        <fullName evidence="1">1,4-dihydroxy-2-naphthoyl-CoA hydrolase</fullName>
        <shortName evidence="1">DHNA-CoA hydrolase</shortName>
        <ecNumber evidence="1">3.1.2.28</ecNumber>
    </recommendedName>
    <alternativeName>
        <fullName evidence="1">DHNA-CoA thioesterase</fullName>
    </alternativeName>
</protein>
<keyword id="KW-0378">Hydrolase</keyword>
<keyword id="KW-1185">Reference proteome</keyword>